<keyword id="KW-0130">Cell adhesion</keyword>
<keyword id="KW-0134">Cell wall</keyword>
<keyword id="KW-0572">Peptidoglycan-anchor</keyword>
<keyword id="KW-0677">Repeat</keyword>
<keyword id="KW-0964">Secreted</keyword>
<keyword id="KW-0732">Signal</keyword>
<keyword id="KW-0843">Virulence</keyword>
<organism>
    <name type="scientific">Staphylococcus aureus (strain USA300)</name>
    <dbReference type="NCBI Taxonomy" id="367830"/>
    <lineage>
        <taxon>Bacteria</taxon>
        <taxon>Bacillati</taxon>
        <taxon>Bacillota</taxon>
        <taxon>Bacilli</taxon>
        <taxon>Bacillales</taxon>
        <taxon>Staphylococcaceae</taxon>
        <taxon>Staphylococcus</taxon>
    </lineage>
</organism>
<proteinExistence type="evidence at protein level"/>
<accession>A0A0H2XKG3</accession>
<protein>
    <recommendedName>
        <fullName evidence="11">Fibronectin-binding protein B</fullName>
    </recommendedName>
</protein>
<sequence length="940" mass="103555">MKSNLRYGIRKHKLGAASVFLGTMIVVGMGQEKEAAASEQNNTTVEESGSSATESKASETQTTTNNVNTIDETQSYSATSTEQPSQSTQVTTEEAPKTVQAPKVETSRVDLPSEKVADKETTGTQVDIAQPSNVSEIKPRMKRSTDVTAVAEKEVVEETKATGTDVTNKVEVEEGSEIVGHKQDTNVVNPHNAERVTLKYKWKFGEGIKAGDYFDFTLSDNVETHGISTLRKVPEIKSTDGQVMATGEIIGERKVRYTFKEYVQEKKDLTAELSLNLFIDPTTVTQKGNQNVEVKLGETTVSKIFNIQYLGGVRDNWGVTANGRIDTLNKVDGKFSHFAYMKPNNQSLSSVTVTGQVTKGNKPGVNNPTVKVYKHIGSDDLAESVYAKLDDVSKFEDVTDNMSLDFDTNGGYSLNFNNLDQSKNYVIKYEGYYDSNASNLEFQTHLFGYYNYYYTSNLTWKNGVAFYSNNAQGDGKDKLKEPIIEHSTPIELEFKSEPPVEKHELTGTIEESNDSKPIDFEYHTAVEGAEGHAEGTIETEEDSIHVDFEESTHENSKHHADVVEYEEDTNPGGGQVTTESNLVEFDEDSTKGIVTGAVSDHTTIEDTKEYTTESNLIELVDELPEEHGQAQGPIEEITENNHHISHSGLGTENGHGNYGVIEEIEENSHVDIKSELGYEGGQNSGNQSFEEDTEEDKPKYEQGGNIVDIDFDSVPQIHGQNNGNQSFEEDTEKDKPKYEQGGNIIDIDFDSVPHIHGFNKHTEIIEEDTNKDKPNYQFGGHNSVDFEEDTLPQVSGHNEGQQTIEEDTTPPIVPPTPPTPEVPSEPETPTPPTPEVPSEPETPTPPTPEVPTEPGKPIPPAKEEPKKPSKPVEQGKVVTPVIEINEKVKAVVPTKKAQSKKSELPETGGEESTNNGMLFGGLFSILGLALLRRNKKNHKA</sequence>
<comment type="function">
    <text evidence="5 6 7 8 9">Multifunctional protein which promotes bacterial attachment to fibrinogen, elastin and fibronectin (PubMed:15234962, PubMed:21569203, PubMed:27387503). Also promotes the accumulation phase and the primary attachment phase of biofilm formation (PubMed:24628034). In addition, protects against the antimicrobial activity of histones. Mechanistically, captures histones and prevents them from reaching the bacterial membrane and simultaneously binds plasminogen, thereby promoting its conversion to plasmin to destroy the bound histones (PubMed:27387503, PubMed:30622139).</text>
</comment>
<comment type="subunit">
    <text evidence="8 9">Interacts with host PLG; this interaction provides active plasmin on the surface of bacteria cells (PubMed:27387503). Interacts with host histones (PubMed:30622139).</text>
</comment>
<comment type="subcellular location">
    <subcellularLocation>
        <location evidence="3">Secreted</location>
        <location evidence="3">Cell wall</location>
        <topology evidence="3">Peptidoglycan-anchor</topology>
    </subcellularLocation>
</comment>
<comment type="domain">
    <text evidence="5">The fibrinogen- and elastin-binding sites have been localized to the N-terminal region.</text>
</comment>
<comment type="disruption phenotype">
    <text evidence="10">In a double fnbA-fnbB deletion, cells adhere to host (green monkey kidney Vero E6 cells) but cannot invade them.</text>
</comment>
<reference key="1">
    <citation type="journal article" date="2006" name="Lancet">
        <title>Complete genome sequence of USA300, an epidemic clone of community-acquired meticillin-resistant Staphylococcus aureus.</title>
        <authorList>
            <person name="Diep B.A."/>
            <person name="Gill S.R."/>
            <person name="Chang R.F."/>
            <person name="Phan T.H."/>
            <person name="Chen J.H."/>
            <person name="Davidson M.G."/>
            <person name="Lin F."/>
            <person name="Lin J."/>
            <person name="Carleton H.A."/>
            <person name="Mongodin E.F."/>
            <person name="Sensabaugh G.F."/>
            <person name="Perdreau-Remington F."/>
        </authorList>
    </citation>
    <scope>NUCLEOTIDE SEQUENCE [LARGE SCALE GENOMIC DNA]</scope>
    <source>
        <strain>USA300</strain>
    </source>
</reference>
<reference key="2">
    <citation type="journal article" date="2004" name="J. Biol. Chem.">
        <title>The N-terminal A domain of fibronectin-binding proteins A and B promotes adhesion of Staphylococcus aureus to elastin.</title>
        <authorList>
            <person name="Roche F.M."/>
            <person name="Downer R."/>
            <person name="Keane F."/>
            <person name="Speziale P."/>
            <person name="Park P.W."/>
            <person name="Foster T.J."/>
        </authorList>
    </citation>
    <scope>FUNCTION IN ELASTIN BINDING</scope>
</reference>
<reference key="3">
    <citation type="journal article" date="2011" name="FEBS J.">
        <title>The A domain of fibronectin-binding protein B of Staphylococcus aureus contains a novel fibronectin binding site.</title>
        <authorList>
            <person name="Burke F.M."/>
            <person name="Di Poto A."/>
            <person name="Speziale P."/>
            <person name="Foster T.J."/>
        </authorList>
    </citation>
    <scope>FUNCTION</scope>
    <scope>DOMAIN</scope>
    <scope>MUTAGENESIS OF ASN-276 AND PHE-278</scope>
</reference>
<reference key="4">
    <citation type="journal article" date="2014" name="FEMS Microbiol. Lett.">
        <title>Fibronectin-binding proteins are required for biofilm formation by community-associated methicillin-resistant Staphylococcus aureus strain LAC.</title>
        <authorList>
            <person name="McCourt J."/>
            <person name="O'Halloran D.P."/>
            <person name="McCarthy H."/>
            <person name="O'Gara J.P."/>
            <person name="Geoghegan J.A."/>
        </authorList>
    </citation>
    <scope>FUNCTION</scope>
    <source>
        <strain>USA300 / LAC</strain>
    </source>
</reference>
<reference key="5">
    <citation type="journal article" date="2016" name="J. Biol. Chem.">
        <title>Molecular Interactions of human plasminogen with fibronectin-binding Protein B (FnBPB), a fibrinogen/fibronectin-binding protein from Staphylococcus aureus.</title>
        <authorList>
            <person name="Pietrocola G."/>
            <person name="Nobile G."/>
            <person name="Gianotti V."/>
            <person name="Zapotoczna M."/>
            <person name="Foster T.J."/>
            <person name="Geoghegan J.A."/>
            <person name="Speziale P."/>
        </authorList>
    </citation>
    <scope>FUNCTION</scope>
    <scope>INTERACTION WITH HOST PLG AND FIBRONECTIN</scope>
    <source>
        <strain>USA300 / LAC</strain>
    </source>
</reference>
<reference key="6">
    <citation type="journal article" date="2019" name="J. Biol. Chem.">
        <title>Fibronectin-binding protein B (FnBPB) from Staphylococcus aureus protects against the antimicrobial activity of histones.</title>
        <authorList>
            <person name="Pietrocola G."/>
            <person name="Nobile G."/>
            <person name="Alfeo M.J."/>
            <person name="Foster T.J."/>
            <person name="Geoghegan J.A."/>
            <person name="De Filippis V."/>
            <person name="Speziale P."/>
        </authorList>
    </citation>
    <scope>FUNCTION</scope>
    <scope>INTERACTION WITH HISTONES</scope>
    <scope>MUTAGENESIS OF ASN-276 AND PHE-278</scope>
    <source>
        <strain>USA300 / LAC</strain>
    </source>
</reference>
<reference key="7">
    <citation type="journal article" date="2023" name="IScience">
        <title>The Staphylococcus aureus protein IsdA increases SARS CoV-2 replication by modulating JAK-STAT signaling.</title>
        <authorList>
            <person name="Goncheva M.I."/>
            <person name="Gibson R.M."/>
            <person name="Shouldice A.C."/>
            <person name="Dikeakos J.D."/>
            <person name="Heinrichs D.E."/>
        </authorList>
    </citation>
    <scope>DISRUPTION PHENOTYPE</scope>
    <scope>VIRULENCE</scope>
    <source>
        <strain>USA300 / LAC</strain>
    </source>
</reference>
<evidence type="ECO:0000250" key="1">
    <source>
        <dbReference type="UniProtKB" id="Q2FE03"/>
    </source>
</evidence>
<evidence type="ECO:0000255" key="2"/>
<evidence type="ECO:0000255" key="3">
    <source>
        <dbReference type="PROSITE-ProRule" id="PRU00477"/>
    </source>
</evidence>
<evidence type="ECO:0000256" key="4">
    <source>
        <dbReference type="SAM" id="MobiDB-lite"/>
    </source>
</evidence>
<evidence type="ECO:0000269" key="5">
    <source>
    </source>
</evidence>
<evidence type="ECO:0000269" key="6">
    <source>
    </source>
</evidence>
<evidence type="ECO:0000269" key="7">
    <source>
    </source>
</evidence>
<evidence type="ECO:0000269" key="8">
    <source>
    </source>
</evidence>
<evidence type="ECO:0000269" key="9">
    <source>
    </source>
</evidence>
<evidence type="ECO:0000269" key="10">
    <source>
    </source>
</evidence>
<evidence type="ECO:0000303" key="11">
    <source>
    </source>
</evidence>
<feature type="signal peptide" evidence="2">
    <location>
        <begin position="1"/>
        <end position="36"/>
    </location>
</feature>
<feature type="chain" id="PRO_5002601974" description="Fibronectin-binding protein B" evidence="2">
    <location>
        <begin position="37"/>
        <end position="940"/>
    </location>
</feature>
<feature type="propeptide" id="PRO_0000447313" description="Removed by sortase" evidence="3">
    <location>
        <begin position="908"/>
        <end position="940"/>
    </location>
</feature>
<feature type="repeat" description="D-1" evidence="1">
    <location>
        <begin position="681"/>
        <end position="718"/>
    </location>
</feature>
<feature type="repeat" description="D-2" evidence="1">
    <location>
        <begin position="719"/>
        <end position="756"/>
    </location>
</feature>
<feature type="repeat" description="D-3" evidence="1">
    <location>
        <begin position="757"/>
        <end position="795"/>
    </location>
</feature>
<feature type="repeat" description="D-4; truncated" evidence="1">
    <location>
        <begin position="796"/>
        <end position="814"/>
    </location>
</feature>
<feature type="repeat" description="WR 1" evidence="1">
    <location>
        <begin position="815"/>
        <end position="828"/>
    </location>
</feature>
<feature type="repeat" description="WR 2" evidence="1">
    <location>
        <begin position="829"/>
        <end position="842"/>
    </location>
</feature>
<feature type="repeat" description="WR 3" evidence="1">
    <location>
        <begin position="857"/>
        <end position="870"/>
    </location>
</feature>
<feature type="region of interest" description="Disordered" evidence="4">
    <location>
        <begin position="36"/>
        <end position="111"/>
    </location>
</feature>
<feature type="region of interest" description="Fibrinogen/elastin/tropoelastin-binding" evidence="6">
    <location>
        <begin position="162"/>
        <end position="480"/>
    </location>
</feature>
<feature type="region of interest" description="Disordered" evidence="4">
    <location>
        <begin position="676"/>
        <end position="746"/>
    </location>
</feature>
<feature type="region of interest" description="Disordered" evidence="4">
    <location>
        <begin position="764"/>
        <end position="878"/>
    </location>
</feature>
<feature type="region of interest" description="Disordered" evidence="4">
    <location>
        <begin position="892"/>
        <end position="918"/>
    </location>
</feature>
<feature type="short sequence motif" description="LPXTG sorting signal" evidence="3">
    <location>
        <begin position="904"/>
        <end position="908"/>
    </location>
</feature>
<feature type="compositionally biased region" description="Polar residues" evidence="4">
    <location>
        <begin position="38"/>
        <end position="92"/>
    </location>
</feature>
<feature type="compositionally biased region" description="Basic and acidic residues" evidence="4">
    <location>
        <begin position="764"/>
        <end position="774"/>
    </location>
</feature>
<feature type="compositionally biased region" description="Polar residues" evidence="4">
    <location>
        <begin position="792"/>
        <end position="802"/>
    </location>
</feature>
<feature type="compositionally biased region" description="Pro residues" evidence="4">
    <location>
        <begin position="811"/>
        <end position="860"/>
    </location>
</feature>
<feature type="modified residue" description="Pentaglycyl murein peptidoglycan amidated threonine" evidence="3">
    <location>
        <position position="907"/>
    </location>
</feature>
<feature type="mutagenesis site" description="Loss of fibrinogen and histone binding; when associated with A-278." evidence="6 9">
    <original>N</original>
    <variation>A</variation>
    <location>
        <position position="276"/>
    </location>
</feature>
<feature type="mutagenesis site" description="Loss of fibrinogen and histone binding; when associated with A-278." evidence="6">
    <original>F</original>
    <variation>A</variation>
    <location>
        <position position="278"/>
    </location>
</feature>
<name>FNBB_STAA3</name>
<gene>
    <name evidence="11" type="primary">fnbB</name>
    <name type="ordered locus">SAUSA300_2440</name>
</gene>
<dbReference type="EMBL" id="CP000255">
    <property type="protein sequence ID" value="ABD22827.1"/>
    <property type="molecule type" value="Genomic_DNA"/>
</dbReference>
<dbReference type="RefSeq" id="WP_000841422.1">
    <property type="nucleotide sequence ID" value="NZ_CP027476.1"/>
</dbReference>
<dbReference type="SMR" id="A0A0H2XKG3"/>
<dbReference type="KEGG" id="saa:SAUSA300_2440"/>
<dbReference type="HOGENOM" id="CLU_009849_1_0_9"/>
<dbReference type="OMA" id="NIRQENP"/>
<dbReference type="Proteomes" id="UP000001939">
    <property type="component" value="Chromosome"/>
</dbReference>
<dbReference type="GO" id="GO:0005576">
    <property type="term" value="C:extracellular region"/>
    <property type="evidence" value="ECO:0007669"/>
    <property type="project" value="UniProtKB-KW"/>
</dbReference>
<dbReference type="GO" id="GO:0007155">
    <property type="term" value="P:cell adhesion"/>
    <property type="evidence" value="ECO:0007669"/>
    <property type="project" value="UniProtKB-KW"/>
</dbReference>
<dbReference type="Gene3D" id="2.60.40.1280">
    <property type="match status" value="1"/>
</dbReference>
<dbReference type="Gene3D" id="2.60.40.1290">
    <property type="match status" value="1"/>
</dbReference>
<dbReference type="InterPro" id="IPR011266">
    <property type="entry name" value="Adhesin_Fg-bd_dom_2"/>
</dbReference>
<dbReference type="InterPro" id="IPR008966">
    <property type="entry name" value="Adhesion_dom_sf"/>
</dbReference>
<dbReference type="InterPro" id="IPR011252">
    <property type="entry name" value="Fibrogen-bd_dom1"/>
</dbReference>
<dbReference type="InterPro" id="IPR004237">
    <property type="entry name" value="Fibron_repeat-bd"/>
</dbReference>
<dbReference type="InterPro" id="IPR019931">
    <property type="entry name" value="LPXTG_anchor"/>
</dbReference>
<dbReference type="InterPro" id="IPR041171">
    <property type="entry name" value="SDR_Ig"/>
</dbReference>
<dbReference type="InterPro" id="IPR005877">
    <property type="entry name" value="YSIRK_signal_dom"/>
</dbReference>
<dbReference type="NCBIfam" id="TIGR01167">
    <property type="entry name" value="LPXTG_anchor"/>
    <property type="match status" value="1"/>
</dbReference>
<dbReference type="Pfam" id="PF17961">
    <property type="entry name" value="Big_8"/>
    <property type="match status" value="1"/>
</dbReference>
<dbReference type="Pfam" id="PF02986">
    <property type="entry name" value="Fn_bind"/>
    <property type="match status" value="3"/>
</dbReference>
<dbReference type="Pfam" id="PF00746">
    <property type="entry name" value="Gram_pos_anchor"/>
    <property type="match status" value="1"/>
</dbReference>
<dbReference type="Pfam" id="PF10425">
    <property type="entry name" value="SdrG_C_C"/>
    <property type="match status" value="1"/>
</dbReference>
<dbReference type="Pfam" id="PF04650">
    <property type="entry name" value="YSIRK_signal"/>
    <property type="match status" value="1"/>
</dbReference>
<dbReference type="SUPFAM" id="SSF49401">
    <property type="entry name" value="Bacterial adhesins"/>
    <property type="match status" value="2"/>
</dbReference>
<dbReference type="PROSITE" id="PS50847">
    <property type="entry name" value="GRAM_POS_ANCHORING"/>
    <property type="match status" value="1"/>
</dbReference>